<evidence type="ECO:0000250" key="1"/>
<evidence type="ECO:0000305" key="2"/>
<accession>P09289</accession>
<reference key="1">
    <citation type="journal article" date="1986" name="J. Gen. Virol.">
        <title>The complete DNA sequence of varicella-zoster virus.</title>
        <authorList>
            <person name="Davison A.J."/>
            <person name="Scott J.E."/>
        </authorList>
    </citation>
    <scope>NUCLEOTIDE SEQUENCE [LARGE SCALE GENOMIC DNA]</scope>
</reference>
<protein>
    <recommendedName>
        <fullName>Tegument protein UL21 homolog</fullName>
    </recommendedName>
</protein>
<sequence length="541" mass="60399">MEFPYHSTVSYNGVTFYFNERATRAYFICGGCLISIPRKHGGEIAKFGHVVRGVGPGDRSVASYVRSELNRTGKTWAVSSNNNCVFLDRVALLAAGSGAVDRDLCGTFDVEVEDPTLADYLVSLPVTHLTLVAGVDVTRENKLKLFPTPTAINTTNGFMYVPNEASFSLVYMRMLELPESLQELVSGLFDGTPEIRDALNGSNDDEKTSIIVSRRAADVVTEDVKADDVPISGEPYSEKQPRRRKKSDHITLSNFVQIRTIPRVMDIWDPRHKATTHCIRALSCAVFFADEVIFKARKWPGLEDELNEARETIYTAVVAVYGERGELPFFGHAYGRDLTSCQRFVIVQYILSRWEAFNCYAVIEDLTRSYVNALPSDDDTDQVAQDLIRTIVDTANSLLREVGFIGTLAETLLFLPLPQLPCYKETSHLAKKEGVRILRLAKTGVGLSDTVPVDVSVTERHEYEISRYLDTLYSGDPCYNGAVRLCRLLGSSIPIALYYNTISGNAFEPYFAGRRYIAYLGALFFGRVHQTPFGDGKKTQR</sequence>
<name>TEG4_VZVD</name>
<keyword id="KW-1035">Host cytoplasm</keyword>
<keyword id="KW-1048">Host nucleus</keyword>
<keyword id="KW-1185">Reference proteome</keyword>
<keyword id="KW-0946">Virion</keyword>
<keyword id="KW-0920">Virion tegument</keyword>
<gene>
    <name type="ORF">ORF38</name>
</gene>
<comment type="function">
    <text evidence="1">May participate in DNA packaging/capsid maturation events. Promotes efficient incorporation of tegument proteins UL46, UL49, and US3 homologs into virions. May also play a role in capsid transport to the trans-Golgi network (TGN) (By similarity).</text>
</comment>
<comment type="subunit">
    <text evidence="1">Interacts (via C-terminus) with UL16.</text>
</comment>
<comment type="subcellular location">
    <subcellularLocation>
        <location evidence="1">Virion tegument</location>
    </subcellularLocation>
    <subcellularLocation>
        <location evidence="1">Host cytoplasm</location>
    </subcellularLocation>
    <subcellularLocation>
        <location evidence="1">Host nucleus</location>
    </subcellularLocation>
</comment>
<comment type="similarity">
    <text evidence="2">Belongs to the alphaherpesvirinae UL21 protein family.</text>
</comment>
<dbReference type="EMBL" id="X04370">
    <property type="protein sequence ID" value="CAA27921.1"/>
    <property type="molecule type" value="Genomic_DNA"/>
</dbReference>
<dbReference type="PIR" id="C27341">
    <property type="entry name" value="WZBE38"/>
</dbReference>
<dbReference type="SMR" id="P09289"/>
<dbReference type="Proteomes" id="UP000002602">
    <property type="component" value="Genome"/>
</dbReference>
<dbReference type="GO" id="GO:0030430">
    <property type="term" value="C:host cell cytoplasm"/>
    <property type="evidence" value="ECO:0007669"/>
    <property type="project" value="UniProtKB-SubCell"/>
</dbReference>
<dbReference type="GO" id="GO:0042025">
    <property type="term" value="C:host cell nucleus"/>
    <property type="evidence" value="ECO:0007669"/>
    <property type="project" value="UniProtKB-SubCell"/>
</dbReference>
<dbReference type="GO" id="GO:0019033">
    <property type="term" value="C:viral tegument"/>
    <property type="evidence" value="ECO:0007669"/>
    <property type="project" value="UniProtKB-SubCell"/>
</dbReference>
<dbReference type="InterPro" id="IPR004936">
    <property type="entry name" value="Herpes_UL21"/>
</dbReference>
<dbReference type="Pfam" id="PF03252">
    <property type="entry name" value="Herpes_UL21"/>
    <property type="match status" value="1"/>
</dbReference>
<proteinExistence type="inferred from homology"/>
<organismHost>
    <name type="scientific">Homo sapiens</name>
    <name type="common">Human</name>
    <dbReference type="NCBI Taxonomy" id="9606"/>
</organismHost>
<feature type="chain" id="PRO_0000115976" description="Tegument protein UL21 homolog">
    <location>
        <begin position="1"/>
        <end position="541"/>
    </location>
</feature>
<organism>
    <name type="scientific">Varicella-zoster virus (strain Dumas)</name>
    <name type="common">HHV-3</name>
    <name type="synonym">Human herpesvirus 3</name>
    <dbReference type="NCBI Taxonomy" id="10338"/>
    <lineage>
        <taxon>Viruses</taxon>
        <taxon>Duplodnaviria</taxon>
        <taxon>Heunggongvirae</taxon>
        <taxon>Peploviricota</taxon>
        <taxon>Herviviricetes</taxon>
        <taxon>Herpesvirales</taxon>
        <taxon>Orthoherpesviridae</taxon>
        <taxon>Alphaherpesvirinae</taxon>
        <taxon>Varicellovirus</taxon>
        <taxon>Varicellovirus humanalpha3</taxon>
        <taxon>Human herpesvirus 3</taxon>
    </lineage>
</organism>